<accession>Q2FDU2</accession>
<dbReference type="EC" id="2.3.1.-"/>
<dbReference type="EMBL" id="CP000255">
    <property type="protein sequence ID" value="ABD22726.1"/>
    <property type="status" value="ALT_INIT"/>
    <property type="molecule type" value="Genomic_DNA"/>
</dbReference>
<dbReference type="KEGG" id="saa:SAUSA300_2502"/>
<dbReference type="HOGENOM" id="CLU_133300_0_0_9"/>
<dbReference type="OMA" id="FNLPCLW"/>
<dbReference type="UniPathway" id="UPA00029">
    <property type="reaction ID" value="UER00560"/>
</dbReference>
<dbReference type="Proteomes" id="UP000001939">
    <property type="component" value="Chromosome"/>
</dbReference>
<dbReference type="GO" id="GO:0005886">
    <property type="term" value="C:plasma membrane"/>
    <property type="evidence" value="ECO:0007669"/>
    <property type="project" value="UniProtKB-SubCell"/>
</dbReference>
<dbReference type="GO" id="GO:0016746">
    <property type="term" value="F:acyltransferase activity"/>
    <property type="evidence" value="ECO:0007669"/>
    <property type="project" value="UniProtKB-KW"/>
</dbReference>
<dbReference type="GO" id="GO:0016117">
    <property type="term" value="P:carotenoid biosynthetic process"/>
    <property type="evidence" value="ECO:0007669"/>
    <property type="project" value="UniProtKB-KW"/>
</dbReference>
<dbReference type="InterPro" id="IPR044021">
    <property type="entry name" value="CrtO"/>
</dbReference>
<dbReference type="Pfam" id="PF18927">
    <property type="entry name" value="CrtO"/>
    <property type="match status" value="1"/>
</dbReference>
<reference key="1">
    <citation type="journal article" date="2006" name="Lancet">
        <title>Complete genome sequence of USA300, an epidemic clone of community-acquired meticillin-resistant Staphylococcus aureus.</title>
        <authorList>
            <person name="Diep B.A."/>
            <person name="Gill S.R."/>
            <person name="Chang R.F."/>
            <person name="Phan T.H."/>
            <person name="Chen J.H."/>
            <person name="Davidson M.G."/>
            <person name="Lin F."/>
            <person name="Lin J."/>
            <person name="Carleton H.A."/>
            <person name="Mongodin E.F."/>
            <person name="Sensabaugh G.F."/>
            <person name="Perdreau-Remington F."/>
        </authorList>
    </citation>
    <scope>NUCLEOTIDE SEQUENCE [LARGE SCALE GENOMIC DNA]</scope>
    <source>
        <strain>USA300</strain>
    </source>
</reference>
<feature type="signal peptide" evidence="2">
    <location>
        <begin position="1"/>
        <end position="28"/>
    </location>
</feature>
<feature type="chain" id="PRO_0000284855" description="Glycosyl-4,4'-diaponeurosporenoate acyltransferase">
    <location>
        <begin position="29"/>
        <end position="165"/>
    </location>
</feature>
<feature type="transmembrane region" description="Helical" evidence="2">
    <location>
        <begin position="126"/>
        <end position="145"/>
    </location>
</feature>
<gene>
    <name type="primary">crtO</name>
    <name type="ordered locus">SAUSA300_2502</name>
</gene>
<protein>
    <recommendedName>
        <fullName>Glycosyl-4,4'-diaponeurosporenoate acyltransferase</fullName>
        <ecNumber>2.3.1.-</ecNumber>
    </recommendedName>
</protein>
<keyword id="KW-0012">Acyltransferase</keyword>
<keyword id="KW-0125">Carotenoid biosynthesis</keyword>
<keyword id="KW-1003">Cell membrane</keyword>
<keyword id="KW-0472">Membrane</keyword>
<keyword id="KW-0732">Signal</keyword>
<keyword id="KW-0808">Transferase</keyword>
<keyword id="KW-0812">Transmembrane</keyword>
<keyword id="KW-1133">Transmembrane helix</keyword>
<evidence type="ECO:0000250" key="1"/>
<evidence type="ECO:0000255" key="2"/>
<evidence type="ECO:0000305" key="3"/>
<name>CRTO_STAA3</name>
<organism>
    <name type="scientific">Staphylococcus aureus (strain USA300)</name>
    <dbReference type="NCBI Taxonomy" id="367830"/>
    <lineage>
        <taxon>Bacteria</taxon>
        <taxon>Bacillati</taxon>
        <taxon>Bacillota</taxon>
        <taxon>Bacilli</taxon>
        <taxon>Bacillales</taxon>
        <taxon>Staphylococcaceae</taxon>
        <taxon>Staphylococcus</taxon>
    </lineage>
</organism>
<sequence>MKTMKKYIKTAFFCSMYWLIVQLNIANLGTRIPDKYFRQKYIIFKSFNFEKHGKFWNKWFYVRKWKHKILDGHQLNQNIYDQRHLMTINTDEIEKMIIETKRAELIHWISILPVIIFNKGPRLVKYINIFYAMIANVPIIIVQRYNRPRLTQLLRILKRRGERHD</sequence>
<comment type="function">
    <text evidence="1">Catalyzes the acylation of glycosyl-4,4'-diaponeurosporenoate, i.e. the esterification of glucose at the C6'' position with the carboxyl group of the C(15) fatty acid 12-methyltetradecanoic acid, to yield staphyloxanthin. This is the last step in the biosynthesis of this orange pigment, present in most staphylococci strains (By similarity).</text>
</comment>
<comment type="pathway">
    <text>Carotenoid biosynthesis; staphyloxanthin biosynthesis; staphyloxanthin from farnesyl diphosphate: step 5/5.</text>
</comment>
<comment type="subcellular location">
    <subcellularLocation>
        <location evidence="3">Cell membrane</location>
        <topology evidence="3">Single-pass membrane protein</topology>
    </subcellularLocation>
</comment>
<comment type="similarity">
    <text evidence="3">Belongs to the acyltransferase CrtO family.</text>
</comment>
<comment type="sequence caution" evidence="3">
    <conflict type="erroneous initiation">
        <sequence resource="EMBL-CDS" id="ABD22726"/>
    </conflict>
</comment>
<proteinExistence type="inferred from homology"/>